<sequence>MSSICPTCTKRVYAAEAVKACEKQYHKLCLQCFHCHKILQLGQYSERDGQPYCKTDYDRLFRQAGYRGGGVVADSFEPAPKVETTTPVEPTPPPTFLTPTEEVKVQLFPTNCPKCGKKAYFNELKVYNSRDWHKTCFACFSCNKNLVSGQYSEKEGLIYCPRCYQSKFGPSGYTNTGALVLH</sequence>
<dbReference type="EMBL" id="AF348466">
    <property type="protein sequence ID" value="AAK30152.1"/>
    <property type="molecule type" value="Genomic_DNA"/>
</dbReference>
<dbReference type="EMBL" id="AAFI02000023">
    <property type="protein sequence ID" value="EAL68113.1"/>
    <property type="molecule type" value="Genomic_DNA"/>
</dbReference>
<dbReference type="RefSeq" id="XP_642140.1">
    <property type="nucleotide sequence ID" value="XM_637048.1"/>
</dbReference>
<dbReference type="FunCoup" id="Q9BIW5">
    <property type="interactions" value="3"/>
</dbReference>
<dbReference type="STRING" id="44689.Q9BIW5"/>
<dbReference type="GlyGen" id="Q9BIW5">
    <property type="glycosylation" value="1 site"/>
</dbReference>
<dbReference type="PaxDb" id="44689-DDB0214931"/>
<dbReference type="EnsemblProtists" id="EAL68113">
    <property type="protein sequence ID" value="EAL68113"/>
    <property type="gene ID" value="DDB_G0277881"/>
</dbReference>
<dbReference type="GeneID" id="8621348"/>
<dbReference type="KEGG" id="ddi:DDB_G0277881"/>
<dbReference type="dictyBase" id="DDB_G0277881">
    <property type="gene designation" value="limC"/>
</dbReference>
<dbReference type="VEuPathDB" id="AmoebaDB:DDB_G0277881"/>
<dbReference type="eggNOG" id="KOG1700">
    <property type="taxonomic scope" value="Eukaryota"/>
</dbReference>
<dbReference type="HOGENOM" id="CLU_054591_2_0_1"/>
<dbReference type="InParanoid" id="Q9BIW5"/>
<dbReference type="OMA" id="CKTDYDR"/>
<dbReference type="PhylomeDB" id="Q9BIW5"/>
<dbReference type="PRO" id="PR:Q9BIW5"/>
<dbReference type="Proteomes" id="UP000002195">
    <property type="component" value="Chromosome 3"/>
</dbReference>
<dbReference type="GO" id="GO:0005938">
    <property type="term" value="C:cell cortex"/>
    <property type="evidence" value="ECO:0000314"/>
    <property type="project" value="dictyBase"/>
</dbReference>
<dbReference type="GO" id="GO:0070382">
    <property type="term" value="C:exocytic vesicle"/>
    <property type="evidence" value="ECO:0000314"/>
    <property type="project" value="dictyBase"/>
</dbReference>
<dbReference type="GO" id="GO:0031941">
    <property type="term" value="C:filamentous actin"/>
    <property type="evidence" value="ECO:0000314"/>
    <property type="project" value="dictyBase"/>
</dbReference>
<dbReference type="GO" id="GO:0044354">
    <property type="term" value="C:macropinosome"/>
    <property type="evidence" value="ECO:0000314"/>
    <property type="project" value="dictyBase"/>
</dbReference>
<dbReference type="GO" id="GO:0001891">
    <property type="term" value="C:phagocytic cup"/>
    <property type="evidence" value="ECO:0000314"/>
    <property type="project" value="dictyBase"/>
</dbReference>
<dbReference type="GO" id="GO:0031143">
    <property type="term" value="C:pseudopodium"/>
    <property type="evidence" value="ECO:0000314"/>
    <property type="project" value="dictyBase"/>
</dbReference>
<dbReference type="GO" id="GO:0051015">
    <property type="term" value="F:actin filament binding"/>
    <property type="evidence" value="ECO:0000314"/>
    <property type="project" value="dictyBase"/>
</dbReference>
<dbReference type="GO" id="GO:0046872">
    <property type="term" value="F:metal ion binding"/>
    <property type="evidence" value="ECO:0007669"/>
    <property type="project" value="UniProtKB-KW"/>
</dbReference>
<dbReference type="GO" id="GO:0006935">
    <property type="term" value="P:chemotaxis"/>
    <property type="evidence" value="ECO:0007669"/>
    <property type="project" value="UniProtKB-KW"/>
</dbReference>
<dbReference type="GO" id="GO:0030866">
    <property type="term" value="P:cortical actin cytoskeleton organization"/>
    <property type="evidence" value="ECO:0000304"/>
    <property type="project" value="dictyBase"/>
</dbReference>
<dbReference type="GO" id="GO:0006970">
    <property type="term" value="P:response to osmotic stress"/>
    <property type="evidence" value="ECO:0000314"/>
    <property type="project" value="dictyBase"/>
</dbReference>
<dbReference type="CDD" id="cd09401">
    <property type="entry name" value="LIM_TLP_like"/>
    <property type="match status" value="2"/>
</dbReference>
<dbReference type="FunFam" id="2.10.110.10:FF:000001">
    <property type="entry name" value="Cysteine and glycine-rich protein 1"/>
    <property type="match status" value="2"/>
</dbReference>
<dbReference type="Gene3D" id="2.10.110.10">
    <property type="entry name" value="Cysteine Rich Protein"/>
    <property type="match status" value="2"/>
</dbReference>
<dbReference type="InterPro" id="IPR001781">
    <property type="entry name" value="Znf_LIM"/>
</dbReference>
<dbReference type="PANTHER" id="PTHR46074">
    <property type="entry name" value="CYSTEINE-RICH PROTEIN CRIP FAMILY MEMBER"/>
    <property type="match status" value="1"/>
</dbReference>
<dbReference type="PANTHER" id="PTHR46074:SF5">
    <property type="entry name" value="LIM DOMAIN-CONTAINING PROTEIN C"/>
    <property type="match status" value="1"/>
</dbReference>
<dbReference type="Pfam" id="PF00412">
    <property type="entry name" value="LIM"/>
    <property type="match status" value="2"/>
</dbReference>
<dbReference type="SMART" id="SM00132">
    <property type="entry name" value="LIM"/>
    <property type="match status" value="2"/>
</dbReference>
<dbReference type="SUPFAM" id="SSF57716">
    <property type="entry name" value="Glucocorticoid receptor-like (DNA-binding domain)"/>
    <property type="match status" value="4"/>
</dbReference>
<dbReference type="PROSITE" id="PS00478">
    <property type="entry name" value="LIM_DOMAIN_1"/>
    <property type="match status" value="2"/>
</dbReference>
<dbReference type="PROSITE" id="PS50023">
    <property type="entry name" value="LIM_DOMAIN_2"/>
    <property type="match status" value="2"/>
</dbReference>
<name>LIMC_DICDI</name>
<accession>Q9BIW5</accession>
<accession>Q54YR2</accession>
<gene>
    <name type="primary">limC</name>
    <name type="ORF">DDB_G0277881</name>
</gene>
<protein>
    <recommendedName>
        <fullName>LIM domain-containing protein C</fullName>
    </recommendedName>
</protein>
<organism>
    <name type="scientific">Dictyostelium discoideum</name>
    <name type="common">Social amoeba</name>
    <dbReference type="NCBI Taxonomy" id="44689"/>
    <lineage>
        <taxon>Eukaryota</taxon>
        <taxon>Amoebozoa</taxon>
        <taxon>Evosea</taxon>
        <taxon>Eumycetozoa</taxon>
        <taxon>Dictyostelia</taxon>
        <taxon>Dictyosteliales</taxon>
        <taxon>Dictyosteliaceae</taxon>
        <taxon>Dictyostelium</taxon>
    </lineage>
</organism>
<evidence type="ECO:0000255" key="1">
    <source>
        <dbReference type="PROSITE-ProRule" id="PRU00125"/>
    </source>
</evidence>
<evidence type="ECO:0000269" key="2">
    <source>
    </source>
</evidence>
<feature type="chain" id="PRO_0000328166" description="LIM domain-containing protein C">
    <location>
        <begin position="1"/>
        <end position="182"/>
    </location>
</feature>
<feature type="domain" description="LIM zinc-binding 1" evidence="1">
    <location>
        <begin position="3"/>
        <end position="63"/>
    </location>
</feature>
<feature type="domain" description="LIM zinc-binding 2" evidence="1">
    <location>
        <begin position="110"/>
        <end position="170"/>
    </location>
</feature>
<proteinExistence type="evidence at transcript level"/>
<comment type="function">
    <text evidence="2">Binds to F-actin and may modulate the chemotactic response during early development and contribute to the maintenance of the strength of the actin cytoskeleton.</text>
</comment>
<comment type="subcellular location">
    <subcellularLocation>
        <location evidence="2">Cell projection</location>
        <location evidence="2">Pseudopodium</location>
    </subcellularLocation>
    <subcellularLocation>
        <location evidence="2">Cytoplasm</location>
        <location evidence="2">Cell cortex</location>
    </subcellularLocation>
    <subcellularLocation>
        <location evidence="2">Cytoplasm</location>
        <location evidence="2">Cytoskeleton</location>
    </subcellularLocation>
</comment>
<comment type="developmental stage">
    <text evidence="2">Expressed during the growth phase and early development. Expression starts to decrease strongly after tight aggregate formation.</text>
</comment>
<comment type="disruption phenotype">
    <text evidence="2">Cells exhibit normal growth, but display altered morphology and F-actin distribution. They show changes in chemotactic motility associated with increased pseudopod formation, are significantly impaired in growth under stress conditions and highly sensitive to osmotic shock.</text>
</comment>
<reference key="1">
    <citation type="journal article" date="2002" name="EMBO J.">
        <title>Functions of LIM proteins in cell polarity and chemotactic motility.</title>
        <authorList>
            <person name="Khurana B."/>
            <person name="Khurana T."/>
            <person name="Khaire N."/>
            <person name="Noegel A.A."/>
        </authorList>
    </citation>
    <scope>NUCLEOTIDE SEQUENCE [GENOMIC DNA]</scope>
    <scope>FUNCTION</scope>
    <scope>SUBCELLULAR LOCATION</scope>
    <scope>DEVELOPMENTAL STAGE</scope>
    <scope>DISRUPTION PHENOTYPE</scope>
    <source>
        <strain>AX2</strain>
    </source>
</reference>
<reference key="2">
    <citation type="journal article" date="2005" name="Nature">
        <title>The genome of the social amoeba Dictyostelium discoideum.</title>
        <authorList>
            <person name="Eichinger L."/>
            <person name="Pachebat J.A."/>
            <person name="Gloeckner G."/>
            <person name="Rajandream M.A."/>
            <person name="Sucgang R."/>
            <person name="Berriman M."/>
            <person name="Song J."/>
            <person name="Olsen R."/>
            <person name="Szafranski K."/>
            <person name="Xu Q."/>
            <person name="Tunggal B."/>
            <person name="Kummerfeld S."/>
            <person name="Madera M."/>
            <person name="Konfortov B.A."/>
            <person name="Rivero F."/>
            <person name="Bankier A.T."/>
            <person name="Lehmann R."/>
            <person name="Hamlin N."/>
            <person name="Davies R."/>
            <person name="Gaudet P."/>
            <person name="Fey P."/>
            <person name="Pilcher K."/>
            <person name="Chen G."/>
            <person name="Saunders D."/>
            <person name="Sodergren E.J."/>
            <person name="Davis P."/>
            <person name="Kerhornou A."/>
            <person name="Nie X."/>
            <person name="Hall N."/>
            <person name="Anjard C."/>
            <person name="Hemphill L."/>
            <person name="Bason N."/>
            <person name="Farbrother P."/>
            <person name="Desany B."/>
            <person name="Just E."/>
            <person name="Morio T."/>
            <person name="Rost R."/>
            <person name="Churcher C.M."/>
            <person name="Cooper J."/>
            <person name="Haydock S."/>
            <person name="van Driessche N."/>
            <person name="Cronin A."/>
            <person name="Goodhead I."/>
            <person name="Muzny D.M."/>
            <person name="Mourier T."/>
            <person name="Pain A."/>
            <person name="Lu M."/>
            <person name="Harper D."/>
            <person name="Lindsay R."/>
            <person name="Hauser H."/>
            <person name="James K.D."/>
            <person name="Quiles M."/>
            <person name="Madan Babu M."/>
            <person name="Saito T."/>
            <person name="Buchrieser C."/>
            <person name="Wardroper A."/>
            <person name="Felder M."/>
            <person name="Thangavelu M."/>
            <person name="Johnson D."/>
            <person name="Knights A."/>
            <person name="Loulseged H."/>
            <person name="Mungall K.L."/>
            <person name="Oliver K."/>
            <person name="Price C."/>
            <person name="Quail M.A."/>
            <person name="Urushihara H."/>
            <person name="Hernandez J."/>
            <person name="Rabbinowitsch E."/>
            <person name="Steffen D."/>
            <person name="Sanders M."/>
            <person name="Ma J."/>
            <person name="Kohara Y."/>
            <person name="Sharp S."/>
            <person name="Simmonds M.N."/>
            <person name="Spiegler S."/>
            <person name="Tivey A."/>
            <person name="Sugano S."/>
            <person name="White B."/>
            <person name="Walker D."/>
            <person name="Woodward J.R."/>
            <person name="Winckler T."/>
            <person name="Tanaka Y."/>
            <person name="Shaulsky G."/>
            <person name="Schleicher M."/>
            <person name="Weinstock G.M."/>
            <person name="Rosenthal A."/>
            <person name="Cox E.C."/>
            <person name="Chisholm R.L."/>
            <person name="Gibbs R.A."/>
            <person name="Loomis W.F."/>
            <person name="Platzer M."/>
            <person name="Kay R.R."/>
            <person name="Williams J.G."/>
            <person name="Dear P.H."/>
            <person name="Noegel A.A."/>
            <person name="Barrell B.G."/>
            <person name="Kuspa A."/>
        </authorList>
    </citation>
    <scope>NUCLEOTIDE SEQUENCE [LARGE SCALE GENOMIC DNA]</scope>
    <source>
        <strain>AX4</strain>
    </source>
</reference>
<keyword id="KW-0009">Actin-binding</keyword>
<keyword id="KW-0966">Cell projection</keyword>
<keyword id="KW-0145">Chemotaxis</keyword>
<keyword id="KW-0963">Cytoplasm</keyword>
<keyword id="KW-0206">Cytoskeleton</keyword>
<keyword id="KW-0440">LIM domain</keyword>
<keyword id="KW-0479">Metal-binding</keyword>
<keyword id="KW-1185">Reference proteome</keyword>
<keyword id="KW-0677">Repeat</keyword>
<keyword id="KW-0862">Zinc</keyword>